<sequence>MVSEVTLDKSRQMYEKAKTLIPGGVSSPVRAIKPYPFYTASADGSKIRDLDGNEYIDYCLAYGPAVLGHNHPVIKAAIKEQLDKGWLYGTPTELEVTLAEKVAGYYPSIDMLRFVSTGTEATMSALRLARGFTRKNKFIKIEGGFHGAHDAVLVKAGSGATTLGEPDSLGIPADFTKYTLQAPYNDIETMTTLVEKNRDDLAAVIIEPVLGNIGPILPLPGYLKELRKLTKENDVLLIFDEVITGFRLAMGGAQEYFGVVPDMTTLGKIVGGGLPIGVFGGRREIMEMIAPSGAVYQAGTFSGSPCSVAAGIAVLDYLKKEDIHAKLNSTGDYMRAVVSEIVEDEGLDYTVCGIASMFKIFFGAEPHNYQEALKCDKEGYLSFFHRMLANGVFLPPSQFETNFISAAHSEEDIEKTLEAYVENL</sequence>
<reference key="1">
    <citation type="journal article" date="2002" name="Genome Res.">
        <title>The genome of Methanosarcina acetivorans reveals extensive metabolic and physiological diversity.</title>
        <authorList>
            <person name="Galagan J.E."/>
            <person name="Nusbaum C."/>
            <person name="Roy A."/>
            <person name="Endrizzi M.G."/>
            <person name="Macdonald P."/>
            <person name="FitzHugh W."/>
            <person name="Calvo S."/>
            <person name="Engels R."/>
            <person name="Smirnov S."/>
            <person name="Atnoor D."/>
            <person name="Brown A."/>
            <person name="Allen N."/>
            <person name="Naylor J."/>
            <person name="Stange-Thomann N."/>
            <person name="DeArellano K."/>
            <person name="Johnson R."/>
            <person name="Linton L."/>
            <person name="McEwan P."/>
            <person name="McKernan K."/>
            <person name="Talamas J."/>
            <person name="Tirrell A."/>
            <person name="Ye W."/>
            <person name="Zimmer A."/>
            <person name="Barber R.D."/>
            <person name="Cann I."/>
            <person name="Graham D.E."/>
            <person name="Grahame D.A."/>
            <person name="Guss A.M."/>
            <person name="Hedderich R."/>
            <person name="Ingram-Smith C."/>
            <person name="Kuettner H.C."/>
            <person name="Krzycki J.A."/>
            <person name="Leigh J.A."/>
            <person name="Li W."/>
            <person name="Liu J."/>
            <person name="Mukhopadhyay B."/>
            <person name="Reeve J.N."/>
            <person name="Smith K."/>
            <person name="Springer T.A."/>
            <person name="Umayam L.A."/>
            <person name="White O."/>
            <person name="White R.H."/>
            <person name="de Macario E.C."/>
            <person name="Ferry J.G."/>
            <person name="Jarrell K.F."/>
            <person name="Jing H."/>
            <person name="Macario A.J.L."/>
            <person name="Paulsen I.T."/>
            <person name="Pritchett M."/>
            <person name="Sowers K.R."/>
            <person name="Swanson R.V."/>
            <person name="Zinder S.H."/>
            <person name="Lander E."/>
            <person name="Metcalf W.W."/>
            <person name="Birren B."/>
        </authorList>
    </citation>
    <scope>NUCLEOTIDE SEQUENCE [LARGE SCALE GENOMIC DNA]</scope>
    <source>
        <strain>ATCC 35395 / DSM 2834 / JCM 12185 / C2A</strain>
    </source>
</reference>
<protein>
    <recommendedName>
        <fullName evidence="1">Glutamate-1-semialdehyde 2,1-aminomutase</fullName>
        <shortName evidence="1">GSA</shortName>
        <ecNumber evidence="1">5.4.3.8</ecNumber>
    </recommendedName>
    <alternativeName>
        <fullName evidence="1">Glutamate-1-semialdehyde aminotransferase</fullName>
        <shortName evidence="1">GSA-AT</shortName>
    </alternativeName>
</protein>
<proteinExistence type="inferred from homology"/>
<gene>
    <name evidence="1" type="primary">hemL</name>
    <name type="ordered locus">MA_0581</name>
</gene>
<comment type="catalytic activity">
    <reaction evidence="1">
        <text>(S)-4-amino-5-oxopentanoate = 5-aminolevulinate</text>
        <dbReference type="Rhea" id="RHEA:14265"/>
        <dbReference type="ChEBI" id="CHEBI:57501"/>
        <dbReference type="ChEBI" id="CHEBI:356416"/>
        <dbReference type="EC" id="5.4.3.8"/>
    </reaction>
</comment>
<comment type="cofactor">
    <cofactor evidence="1">
        <name>pyridoxal 5'-phosphate</name>
        <dbReference type="ChEBI" id="CHEBI:597326"/>
    </cofactor>
</comment>
<comment type="pathway">
    <text evidence="1">Porphyrin-containing compound metabolism; protoporphyrin-IX biosynthesis; 5-aminolevulinate from L-glutamyl-tRNA(Glu): step 2/2.</text>
</comment>
<comment type="subcellular location">
    <subcellularLocation>
        <location evidence="1">Cytoplasm</location>
    </subcellularLocation>
</comment>
<comment type="similarity">
    <text evidence="1">Belongs to the class-III pyridoxal-phosphate-dependent aminotransferase family. HemL subfamily.</text>
</comment>
<keyword id="KW-0963">Cytoplasm</keyword>
<keyword id="KW-0413">Isomerase</keyword>
<keyword id="KW-0627">Porphyrin biosynthesis</keyword>
<keyword id="KW-0663">Pyridoxal phosphate</keyword>
<keyword id="KW-1185">Reference proteome</keyword>
<feature type="chain" id="PRO_0000120481" description="Glutamate-1-semialdehyde 2,1-aminomutase">
    <location>
        <begin position="1"/>
        <end position="424"/>
    </location>
</feature>
<feature type="modified residue" description="N6-(pyridoxal phosphate)lysine" evidence="1">
    <location>
        <position position="268"/>
    </location>
</feature>
<organism>
    <name type="scientific">Methanosarcina acetivorans (strain ATCC 35395 / DSM 2834 / JCM 12185 / C2A)</name>
    <dbReference type="NCBI Taxonomy" id="188937"/>
    <lineage>
        <taxon>Archaea</taxon>
        <taxon>Methanobacteriati</taxon>
        <taxon>Methanobacteriota</taxon>
        <taxon>Stenosarchaea group</taxon>
        <taxon>Methanomicrobia</taxon>
        <taxon>Methanosarcinales</taxon>
        <taxon>Methanosarcinaceae</taxon>
        <taxon>Methanosarcina</taxon>
    </lineage>
</organism>
<dbReference type="EC" id="5.4.3.8" evidence="1"/>
<dbReference type="EMBL" id="AE010299">
    <property type="protein sequence ID" value="AAM04025.1"/>
    <property type="molecule type" value="Genomic_DNA"/>
</dbReference>
<dbReference type="RefSeq" id="WP_011020630.1">
    <property type="nucleotide sequence ID" value="NC_003552.1"/>
</dbReference>
<dbReference type="SMR" id="Q8TT57"/>
<dbReference type="FunCoup" id="Q8TT57">
    <property type="interactions" value="154"/>
</dbReference>
<dbReference type="STRING" id="188937.MA_0581"/>
<dbReference type="EnsemblBacteria" id="AAM04025">
    <property type="protein sequence ID" value="AAM04025"/>
    <property type="gene ID" value="MA_0581"/>
</dbReference>
<dbReference type="GeneID" id="1472473"/>
<dbReference type="KEGG" id="mac:MA_0581"/>
<dbReference type="HOGENOM" id="CLU_016922_1_5_2"/>
<dbReference type="InParanoid" id="Q8TT57"/>
<dbReference type="OrthoDB" id="6524at2157"/>
<dbReference type="PhylomeDB" id="Q8TT57"/>
<dbReference type="UniPathway" id="UPA00251">
    <property type="reaction ID" value="UER00317"/>
</dbReference>
<dbReference type="Proteomes" id="UP000002487">
    <property type="component" value="Chromosome"/>
</dbReference>
<dbReference type="GO" id="GO:0005737">
    <property type="term" value="C:cytoplasm"/>
    <property type="evidence" value="ECO:0007669"/>
    <property type="project" value="UniProtKB-SubCell"/>
</dbReference>
<dbReference type="GO" id="GO:0042286">
    <property type="term" value="F:glutamate-1-semialdehyde 2,1-aminomutase activity"/>
    <property type="evidence" value="ECO:0007669"/>
    <property type="project" value="UniProtKB-UniRule"/>
</dbReference>
<dbReference type="GO" id="GO:0030170">
    <property type="term" value="F:pyridoxal phosphate binding"/>
    <property type="evidence" value="ECO:0007669"/>
    <property type="project" value="InterPro"/>
</dbReference>
<dbReference type="GO" id="GO:0008483">
    <property type="term" value="F:transaminase activity"/>
    <property type="evidence" value="ECO:0007669"/>
    <property type="project" value="InterPro"/>
</dbReference>
<dbReference type="GO" id="GO:0006782">
    <property type="term" value="P:protoporphyrinogen IX biosynthetic process"/>
    <property type="evidence" value="ECO:0007669"/>
    <property type="project" value="UniProtKB-UniRule"/>
</dbReference>
<dbReference type="CDD" id="cd00610">
    <property type="entry name" value="OAT_like"/>
    <property type="match status" value="1"/>
</dbReference>
<dbReference type="FunFam" id="3.40.640.10:FF:000021">
    <property type="entry name" value="Glutamate-1-semialdehyde 2,1-aminomutase"/>
    <property type="match status" value="1"/>
</dbReference>
<dbReference type="Gene3D" id="3.90.1150.10">
    <property type="entry name" value="Aspartate Aminotransferase, domain 1"/>
    <property type="match status" value="1"/>
</dbReference>
<dbReference type="Gene3D" id="3.40.640.10">
    <property type="entry name" value="Type I PLP-dependent aspartate aminotransferase-like (Major domain)"/>
    <property type="match status" value="1"/>
</dbReference>
<dbReference type="HAMAP" id="MF_00375">
    <property type="entry name" value="HemL_aminotrans_3"/>
    <property type="match status" value="1"/>
</dbReference>
<dbReference type="InterPro" id="IPR004639">
    <property type="entry name" value="4pyrrol_synth_GluAld_NH2Trfase"/>
</dbReference>
<dbReference type="InterPro" id="IPR005814">
    <property type="entry name" value="Aminotrans_3"/>
</dbReference>
<dbReference type="InterPro" id="IPR049704">
    <property type="entry name" value="Aminotrans_3_PPA_site"/>
</dbReference>
<dbReference type="InterPro" id="IPR015424">
    <property type="entry name" value="PyrdxlP-dep_Trfase"/>
</dbReference>
<dbReference type="InterPro" id="IPR015421">
    <property type="entry name" value="PyrdxlP-dep_Trfase_major"/>
</dbReference>
<dbReference type="InterPro" id="IPR015422">
    <property type="entry name" value="PyrdxlP-dep_Trfase_small"/>
</dbReference>
<dbReference type="NCBIfam" id="TIGR00713">
    <property type="entry name" value="hemL"/>
    <property type="match status" value="1"/>
</dbReference>
<dbReference type="NCBIfam" id="NF000818">
    <property type="entry name" value="PRK00062.1"/>
    <property type="match status" value="1"/>
</dbReference>
<dbReference type="PANTHER" id="PTHR43713">
    <property type="entry name" value="GLUTAMATE-1-SEMIALDEHYDE 2,1-AMINOMUTASE"/>
    <property type="match status" value="1"/>
</dbReference>
<dbReference type="PANTHER" id="PTHR43713:SF3">
    <property type="entry name" value="GLUTAMATE-1-SEMIALDEHYDE 2,1-AMINOMUTASE 1, CHLOROPLASTIC-RELATED"/>
    <property type="match status" value="1"/>
</dbReference>
<dbReference type="Pfam" id="PF00202">
    <property type="entry name" value="Aminotran_3"/>
    <property type="match status" value="1"/>
</dbReference>
<dbReference type="SUPFAM" id="SSF53383">
    <property type="entry name" value="PLP-dependent transferases"/>
    <property type="match status" value="1"/>
</dbReference>
<dbReference type="PROSITE" id="PS00600">
    <property type="entry name" value="AA_TRANSFER_CLASS_3"/>
    <property type="match status" value="1"/>
</dbReference>
<evidence type="ECO:0000255" key="1">
    <source>
        <dbReference type="HAMAP-Rule" id="MF_00375"/>
    </source>
</evidence>
<name>GSA_METAC</name>
<accession>Q8TT57</accession>